<proteinExistence type="inferred from homology"/>
<comment type="function">
    <text evidence="2">GTP hydrolase that promotes the GTP-dependent binding of aminoacyl-tRNA to the A-site of ribosomes during protein biosynthesis.</text>
</comment>
<comment type="catalytic activity">
    <reaction evidence="2">
        <text>GTP + H2O = GDP + phosphate + H(+)</text>
        <dbReference type="Rhea" id="RHEA:19669"/>
        <dbReference type="ChEBI" id="CHEBI:15377"/>
        <dbReference type="ChEBI" id="CHEBI:15378"/>
        <dbReference type="ChEBI" id="CHEBI:37565"/>
        <dbReference type="ChEBI" id="CHEBI:43474"/>
        <dbReference type="ChEBI" id="CHEBI:58189"/>
        <dbReference type="EC" id="3.6.5.3"/>
    </reaction>
    <physiologicalReaction direction="left-to-right" evidence="2">
        <dbReference type="Rhea" id="RHEA:19670"/>
    </physiologicalReaction>
</comment>
<comment type="subunit">
    <text evidence="2">Monomer.</text>
</comment>
<comment type="subcellular location">
    <subcellularLocation>
        <location evidence="2">Cytoplasm</location>
    </subcellularLocation>
</comment>
<comment type="similarity">
    <text evidence="2">Belongs to the TRAFAC class translation factor GTPase superfamily. Classic translation factor GTPase family. EF-Tu/EF-1A subfamily.</text>
</comment>
<evidence type="ECO:0000250" key="1"/>
<evidence type="ECO:0000255" key="2">
    <source>
        <dbReference type="HAMAP-Rule" id="MF_00118"/>
    </source>
</evidence>
<name>EFTU_MYCMS</name>
<protein>
    <recommendedName>
        <fullName evidence="2">Elongation factor Tu</fullName>
        <shortName evidence="2">EF-Tu</shortName>
        <ecNumber evidence="2">3.6.5.3</ecNumber>
    </recommendedName>
</protein>
<accession>Q6MU81</accession>
<gene>
    <name evidence="2" type="primary">tuf</name>
    <name type="ordered locus">MSC_0160</name>
</gene>
<reference key="1">
    <citation type="journal article" date="2004" name="Genome Res.">
        <title>The genome sequence of Mycoplasma mycoides subsp. mycoides SC type strain PG1T, the causative agent of contagious bovine pleuropneumonia (CBPP).</title>
        <authorList>
            <person name="Westberg J."/>
            <person name="Persson A."/>
            <person name="Holmberg A."/>
            <person name="Goesmann A."/>
            <person name="Lundeberg J."/>
            <person name="Johansson K.-E."/>
            <person name="Pettersson B."/>
            <person name="Uhlen M."/>
        </authorList>
    </citation>
    <scope>NUCLEOTIDE SEQUENCE [LARGE SCALE GENOMIC DNA]</scope>
    <source>
        <strain>CCUG 32753 / NCTC 10114 / PG1</strain>
    </source>
</reference>
<dbReference type="EC" id="3.6.5.3" evidence="2"/>
<dbReference type="EMBL" id="BX293980">
    <property type="protein sequence ID" value="CAE76805.1"/>
    <property type="molecule type" value="Genomic_DNA"/>
</dbReference>
<dbReference type="RefSeq" id="NP_975163.1">
    <property type="nucleotide sequence ID" value="NC_005364.2"/>
</dbReference>
<dbReference type="RefSeq" id="WP_011166362.1">
    <property type="nucleotide sequence ID" value="NC_005364.2"/>
</dbReference>
<dbReference type="SMR" id="Q6MU81"/>
<dbReference type="STRING" id="272632.MSC_0160"/>
<dbReference type="GeneID" id="93426634"/>
<dbReference type="KEGG" id="mmy:MSC_0160"/>
<dbReference type="PATRIC" id="fig|272632.4.peg.169"/>
<dbReference type="eggNOG" id="COG0050">
    <property type="taxonomic scope" value="Bacteria"/>
</dbReference>
<dbReference type="HOGENOM" id="CLU_007265_0_0_14"/>
<dbReference type="PRO" id="PR:Q6MU81"/>
<dbReference type="Proteomes" id="UP000001016">
    <property type="component" value="Chromosome"/>
</dbReference>
<dbReference type="GO" id="GO:0005829">
    <property type="term" value="C:cytosol"/>
    <property type="evidence" value="ECO:0007669"/>
    <property type="project" value="TreeGrafter"/>
</dbReference>
<dbReference type="GO" id="GO:0005525">
    <property type="term" value="F:GTP binding"/>
    <property type="evidence" value="ECO:0007669"/>
    <property type="project" value="UniProtKB-UniRule"/>
</dbReference>
<dbReference type="GO" id="GO:0003924">
    <property type="term" value="F:GTPase activity"/>
    <property type="evidence" value="ECO:0007669"/>
    <property type="project" value="InterPro"/>
</dbReference>
<dbReference type="GO" id="GO:0003746">
    <property type="term" value="F:translation elongation factor activity"/>
    <property type="evidence" value="ECO:0007669"/>
    <property type="project" value="UniProtKB-UniRule"/>
</dbReference>
<dbReference type="CDD" id="cd01884">
    <property type="entry name" value="EF_Tu"/>
    <property type="match status" value="1"/>
</dbReference>
<dbReference type="CDD" id="cd03697">
    <property type="entry name" value="EFTU_II"/>
    <property type="match status" value="1"/>
</dbReference>
<dbReference type="CDD" id="cd03707">
    <property type="entry name" value="EFTU_III"/>
    <property type="match status" value="1"/>
</dbReference>
<dbReference type="FunFam" id="2.40.30.10:FF:000001">
    <property type="entry name" value="Elongation factor Tu"/>
    <property type="match status" value="1"/>
</dbReference>
<dbReference type="FunFam" id="3.40.50.300:FF:000003">
    <property type="entry name" value="Elongation factor Tu"/>
    <property type="match status" value="1"/>
</dbReference>
<dbReference type="Gene3D" id="3.40.50.300">
    <property type="entry name" value="P-loop containing nucleotide triphosphate hydrolases"/>
    <property type="match status" value="1"/>
</dbReference>
<dbReference type="Gene3D" id="2.40.30.10">
    <property type="entry name" value="Translation factors"/>
    <property type="match status" value="2"/>
</dbReference>
<dbReference type="HAMAP" id="MF_00118_B">
    <property type="entry name" value="EF_Tu_B"/>
    <property type="match status" value="1"/>
</dbReference>
<dbReference type="InterPro" id="IPR041709">
    <property type="entry name" value="EF-Tu_GTP-bd"/>
</dbReference>
<dbReference type="InterPro" id="IPR050055">
    <property type="entry name" value="EF-Tu_GTPase"/>
</dbReference>
<dbReference type="InterPro" id="IPR004161">
    <property type="entry name" value="EFTu-like_2"/>
</dbReference>
<dbReference type="InterPro" id="IPR033720">
    <property type="entry name" value="EFTU_2"/>
</dbReference>
<dbReference type="InterPro" id="IPR031157">
    <property type="entry name" value="G_TR_CS"/>
</dbReference>
<dbReference type="InterPro" id="IPR027417">
    <property type="entry name" value="P-loop_NTPase"/>
</dbReference>
<dbReference type="InterPro" id="IPR005225">
    <property type="entry name" value="Small_GTP-bd"/>
</dbReference>
<dbReference type="InterPro" id="IPR000795">
    <property type="entry name" value="T_Tr_GTP-bd_dom"/>
</dbReference>
<dbReference type="InterPro" id="IPR009000">
    <property type="entry name" value="Transl_B-barrel_sf"/>
</dbReference>
<dbReference type="InterPro" id="IPR009001">
    <property type="entry name" value="Transl_elong_EF1A/Init_IF2_C"/>
</dbReference>
<dbReference type="InterPro" id="IPR004541">
    <property type="entry name" value="Transl_elong_EFTu/EF1A_bac/org"/>
</dbReference>
<dbReference type="InterPro" id="IPR004160">
    <property type="entry name" value="Transl_elong_EFTu/EF1A_C"/>
</dbReference>
<dbReference type="NCBIfam" id="TIGR00485">
    <property type="entry name" value="EF-Tu"/>
    <property type="match status" value="1"/>
</dbReference>
<dbReference type="NCBIfam" id="NF000766">
    <property type="entry name" value="PRK00049.1"/>
    <property type="match status" value="1"/>
</dbReference>
<dbReference type="NCBIfam" id="NF009372">
    <property type="entry name" value="PRK12735.1"/>
    <property type="match status" value="1"/>
</dbReference>
<dbReference type="NCBIfam" id="NF009373">
    <property type="entry name" value="PRK12736.1"/>
    <property type="match status" value="1"/>
</dbReference>
<dbReference type="NCBIfam" id="TIGR00231">
    <property type="entry name" value="small_GTP"/>
    <property type="match status" value="1"/>
</dbReference>
<dbReference type="PANTHER" id="PTHR43721:SF22">
    <property type="entry name" value="ELONGATION FACTOR TU, MITOCHONDRIAL"/>
    <property type="match status" value="1"/>
</dbReference>
<dbReference type="PANTHER" id="PTHR43721">
    <property type="entry name" value="ELONGATION FACTOR TU-RELATED"/>
    <property type="match status" value="1"/>
</dbReference>
<dbReference type="Pfam" id="PF00009">
    <property type="entry name" value="GTP_EFTU"/>
    <property type="match status" value="1"/>
</dbReference>
<dbReference type="Pfam" id="PF03144">
    <property type="entry name" value="GTP_EFTU_D2"/>
    <property type="match status" value="1"/>
</dbReference>
<dbReference type="Pfam" id="PF03143">
    <property type="entry name" value="GTP_EFTU_D3"/>
    <property type="match status" value="1"/>
</dbReference>
<dbReference type="PRINTS" id="PR00315">
    <property type="entry name" value="ELONGATNFCT"/>
</dbReference>
<dbReference type="SUPFAM" id="SSF50465">
    <property type="entry name" value="EF-Tu/eEF-1alpha/eIF2-gamma C-terminal domain"/>
    <property type="match status" value="1"/>
</dbReference>
<dbReference type="SUPFAM" id="SSF52540">
    <property type="entry name" value="P-loop containing nucleoside triphosphate hydrolases"/>
    <property type="match status" value="1"/>
</dbReference>
<dbReference type="SUPFAM" id="SSF50447">
    <property type="entry name" value="Translation proteins"/>
    <property type="match status" value="1"/>
</dbReference>
<dbReference type="PROSITE" id="PS00301">
    <property type="entry name" value="G_TR_1"/>
    <property type="match status" value="1"/>
</dbReference>
<dbReference type="PROSITE" id="PS51722">
    <property type="entry name" value="G_TR_2"/>
    <property type="match status" value="1"/>
</dbReference>
<organism>
    <name type="scientific">Mycoplasma mycoides subsp. mycoides SC (strain CCUG 32753 / NCTC 10114 / PG1)</name>
    <dbReference type="NCBI Taxonomy" id="272632"/>
    <lineage>
        <taxon>Bacteria</taxon>
        <taxon>Bacillati</taxon>
        <taxon>Mycoplasmatota</taxon>
        <taxon>Mollicutes</taxon>
        <taxon>Mycoplasmataceae</taxon>
        <taxon>Mycoplasma</taxon>
    </lineage>
</organism>
<feature type="chain" id="PRO_1000015700" description="Elongation factor Tu">
    <location>
        <begin position="1"/>
        <end position="395"/>
    </location>
</feature>
<feature type="domain" description="tr-type G">
    <location>
        <begin position="10"/>
        <end position="204"/>
    </location>
</feature>
<feature type="region of interest" description="G1" evidence="1">
    <location>
        <begin position="19"/>
        <end position="26"/>
    </location>
</feature>
<feature type="region of interest" description="G2" evidence="1">
    <location>
        <begin position="60"/>
        <end position="64"/>
    </location>
</feature>
<feature type="region of interest" description="G3" evidence="1">
    <location>
        <begin position="81"/>
        <end position="84"/>
    </location>
</feature>
<feature type="region of interest" description="G4" evidence="1">
    <location>
        <begin position="136"/>
        <end position="139"/>
    </location>
</feature>
<feature type="region of interest" description="G5" evidence="1">
    <location>
        <begin position="174"/>
        <end position="176"/>
    </location>
</feature>
<feature type="binding site" evidence="2">
    <location>
        <begin position="19"/>
        <end position="26"/>
    </location>
    <ligand>
        <name>GTP</name>
        <dbReference type="ChEBI" id="CHEBI:37565"/>
    </ligand>
</feature>
<feature type="binding site" evidence="2">
    <location>
        <position position="26"/>
    </location>
    <ligand>
        <name>Mg(2+)</name>
        <dbReference type="ChEBI" id="CHEBI:18420"/>
    </ligand>
</feature>
<feature type="binding site" evidence="2">
    <location>
        <begin position="81"/>
        <end position="85"/>
    </location>
    <ligand>
        <name>GTP</name>
        <dbReference type="ChEBI" id="CHEBI:37565"/>
    </ligand>
</feature>
<feature type="binding site" evidence="2">
    <location>
        <begin position="136"/>
        <end position="139"/>
    </location>
    <ligand>
        <name>GTP</name>
        <dbReference type="ChEBI" id="CHEBI:37565"/>
    </ligand>
</feature>
<keyword id="KW-0963">Cytoplasm</keyword>
<keyword id="KW-0251">Elongation factor</keyword>
<keyword id="KW-0342">GTP-binding</keyword>
<keyword id="KW-0378">Hydrolase</keyword>
<keyword id="KW-0460">Magnesium</keyword>
<keyword id="KW-0479">Metal-binding</keyword>
<keyword id="KW-0547">Nucleotide-binding</keyword>
<keyword id="KW-0648">Protein biosynthesis</keyword>
<keyword id="KW-1185">Reference proteome</keyword>
<sequence length="395" mass="43304">MAKEQFDRSLPHVNIGTIGHVDHGKTTLTAAITKVLSEQGNAEFKDYANIDNAPEERERGITINTAHVEYKTANRHYAHVDCPGHADYVKNMITGAAQMDGAILVVAATDGPMPQTREHILLSRQVGVPKIVVFLNKCDMVEDDEMIDLVEMEIRDLLTEYDFDGEGAPVIRGSALGALNGDSKWTGAINELMAAVDEYIPTPQRDADKTFLMPVEDVFTITGRGTVATGRVERGTVKVNEEVEIIGLKEEPTKTVVTGLEMFRKLLDFAVAGDNVGALLRGVDRHSVERGQVLAKPGTIKPHTVLKASVYALTQEEGGRHKPFFNKYRPQFYFRTTDVTGEVTLPEGTDMVMPGDNVEMEIQLIKPVAVEEGTKFSIREGGRTIGAGTVISIEK</sequence>